<accession>Q8DH57</accession>
<gene>
    <name evidence="1" type="primary">dapL</name>
    <name type="ordered locus">tll2102</name>
</gene>
<proteinExistence type="inferred from homology"/>
<evidence type="ECO:0000255" key="1">
    <source>
        <dbReference type="HAMAP-Rule" id="MF_01642"/>
    </source>
</evidence>
<name>DAPAT_THEVB</name>
<dbReference type="EC" id="2.6.1.83" evidence="1"/>
<dbReference type="EMBL" id="BA000039">
    <property type="protein sequence ID" value="BAC09654.1"/>
    <property type="molecule type" value="Genomic_DNA"/>
</dbReference>
<dbReference type="RefSeq" id="NP_682892.1">
    <property type="nucleotide sequence ID" value="NC_004113.1"/>
</dbReference>
<dbReference type="RefSeq" id="WP_011057937.1">
    <property type="nucleotide sequence ID" value="NC_004113.1"/>
</dbReference>
<dbReference type="SMR" id="Q8DH57"/>
<dbReference type="STRING" id="197221.gene:10748713"/>
<dbReference type="EnsemblBacteria" id="BAC09654">
    <property type="protein sequence ID" value="BAC09654"/>
    <property type="gene ID" value="BAC09654"/>
</dbReference>
<dbReference type="KEGG" id="tel:tll2102"/>
<dbReference type="PATRIC" id="fig|197221.4.peg.2200"/>
<dbReference type="eggNOG" id="COG0436">
    <property type="taxonomic scope" value="Bacteria"/>
</dbReference>
<dbReference type="UniPathway" id="UPA00034">
    <property type="reaction ID" value="UER00466"/>
</dbReference>
<dbReference type="Proteomes" id="UP000000440">
    <property type="component" value="Chromosome"/>
</dbReference>
<dbReference type="GO" id="GO:0010285">
    <property type="term" value="F:L,L-diaminopimelate aminotransferase activity"/>
    <property type="evidence" value="ECO:0007669"/>
    <property type="project" value="UniProtKB-UniRule"/>
</dbReference>
<dbReference type="GO" id="GO:0030170">
    <property type="term" value="F:pyridoxal phosphate binding"/>
    <property type="evidence" value="ECO:0007669"/>
    <property type="project" value="UniProtKB-UniRule"/>
</dbReference>
<dbReference type="GO" id="GO:0033362">
    <property type="term" value="P:lysine biosynthetic process via diaminopimelate, diaminopimelate-aminotransferase pathway"/>
    <property type="evidence" value="ECO:0007669"/>
    <property type="project" value="UniProtKB-UniRule"/>
</dbReference>
<dbReference type="CDD" id="cd00609">
    <property type="entry name" value="AAT_like"/>
    <property type="match status" value="1"/>
</dbReference>
<dbReference type="FunFam" id="3.40.640.10:FF:000099">
    <property type="entry name" value="LL-diaminopimelate aminotransferase, chloroplastic"/>
    <property type="match status" value="1"/>
</dbReference>
<dbReference type="Gene3D" id="3.90.1150.10">
    <property type="entry name" value="Aspartate Aminotransferase, domain 1"/>
    <property type="match status" value="1"/>
</dbReference>
<dbReference type="Gene3D" id="3.40.640.10">
    <property type="entry name" value="Type I PLP-dependent aspartate aminotransferase-like (Major domain)"/>
    <property type="match status" value="1"/>
</dbReference>
<dbReference type="HAMAP" id="MF_01642">
    <property type="entry name" value="DapL_aminotrans_1"/>
    <property type="match status" value="1"/>
</dbReference>
<dbReference type="InterPro" id="IPR004839">
    <property type="entry name" value="Aminotransferase_I/II_large"/>
</dbReference>
<dbReference type="InterPro" id="IPR019942">
    <property type="entry name" value="DapL/ALD1"/>
</dbReference>
<dbReference type="InterPro" id="IPR015424">
    <property type="entry name" value="PyrdxlP-dep_Trfase"/>
</dbReference>
<dbReference type="InterPro" id="IPR015421">
    <property type="entry name" value="PyrdxlP-dep_Trfase_major"/>
</dbReference>
<dbReference type="InterPro" id="IPR015422">
    <property type="entry name" value="PyrdxlP-dep_Trfase_small"/>
</dbReference>
<dbReference type="NCBIfam" id="TIGR03542">
    <property type="entry name" value="DAPAT_plant"/>
    <property type="match status" value="1"/>
</dbReference>
<dbReference type="PANTHER" id="PTHR43144">
    <property type="entry name" value="AMINOTRANSFERASE"/>
    <property type="match status" value="1"/>
</dbReference>
<dbReference type="Pfam" id="PF00155">
    <property type="entry name" value="Aminotran_1_2"/>
    <property type="match status" value="1"/>
</dbReference>
<dbReference type="SUPFAM" id="SSF53383">
    <property type="entry name" value="PLP-dependent transferases"/>
    <property type="match status" value="1"/>
</dbReference>
<feature type="chain" id="PRO_0000312543" description="LL-diaminopimelate aminotransferase">
    <location>
        <begin position="1"/>
        <end position="410"/>
    </location>
</feature>
<feature type="binding site" evidence="1">
    <location>
        <position position="15"/>
    </location>
    <ligand>
        <name>substrate</name>
    </ligand>
</feature>
<feature type="binding site" evidence="1">
    <location>
        <position position="42"/>
    </location>
    <ligand>
        <name>substrate</name>
    </ligand>
</feature>
<feature type="binding site" evidence="1">
    <location>
        <position position="72"/>
    </location>
    <ligand>
        <name>pyridoxal 5'-phosphate</name>
        <dbReference type="ChEBI" id="CHEBI:597326"/>
    </ligand>
</feature>
<feature type="binding site" evidence="1">
    <location>
        <begin position="108"/>
        <end position="109"/>
    </location>
    <ligand>
        <name>pyridoxal 5'-phosphate</name>
        <dbReference type="ChEBI" id="CHEBI:597326"/>
    </ligand>
</feature>
<feature type="binding site" evidence="1">
    <location>
        <position position="109"/>
    </location>
    <ligand>
        <name>substrate</name>
    </ligand>
</feature>
<feature type="binding site" evidence="1">
    <location>
        <position position="132"/>
    </location>
    <ligand>
        <name>pyridoxal 5'-phosphate</name>
        <dbReference type="ChEBI" id="CHEBI:597326"/>
    </ligand>
</feature>
<feature type="binding site" evidence="1">
    <location>
        <position position="132"/>
    </location>
    <ligand>
        <name>substrate</name>
    </ligand>
</feature>
<feature type="binding site" evidence="1">
    <location>
        <position position="187"/>
    </location>
    <ligand>
        <name>pyridoxal 5'-phosphate</name>
        <dbReference type="ChEBI" id="CHEBI:597326"/>
    </ligand>
</feature>
<feature type="binding site" evidence="1">
    <location>
        <position position="187"/>
    </location>
    <ligand>
        <name>substrate</name>
    </ligand>
</feature>
<feature type="binding site" evidence="1">
    <location>
        <position position="218"/>
    </location>
    <ligand>
        <name>pyridoxal 5'-phosphate</name>
        <dbReference type="ChEBI" id="CHEBI:597326"/>
    </ligand>
</feature>
<feature type="binding site" evidence="1">
    <location>
        <begin position="246"/>
        <end position="248"/>
    </location>
    <ligand>
        <name>pyridoxal 5'-phosphate</name>
        <dbReference type="ChEBI" id="CHEBI:597326"/>
    </ligand>
</feature>
<feature type="binding site" evidence="1">
    <location>
        <position position="257"/>
    </location>
    <ligand>
        <name>pyridoxal 5'-phosphate</name>
        <dbReference type="ChEBI" id="CHEBI:597326"/>
    </ligand>
</feature>
<feature type="binding site" evidence="1">
    <location>
        <position position="292"/>
    </location>
    <ligand>
        <name>pyridoxal 5'-phosphate</name>
        <dbReference type="ChEBI" id="CHEBI:597326"/>
    </ligand>
</feature>
<feature type="binding site" evidence="1">
    <location>
        <position position="292"/>
    </location>
    <ligand>
        <name>substrate</name>
    </ligand>
</feature>
<feature type="binding site" evidence="1">
    <location>
        <position position="388"/>
    </location>
    <ligand>
        <name>substrate</name>
    </ligand>
</feature>
<feature type="modified residue" description="N6-(pyridoxal phosphate)lysine" evidence="1">
    <location>
        <position position="249"/>
    </location>
</feature>
<comment type="function">
    <text evidence="1">Involved in the synthesis of meso-diaminopimelate (m-DAP or DL-DAP), required for both lysine and peptidoglycan biosynthesis. Catalyzes the direct conversion of tetrahydrodipicolinate to LL-diaminopimelate.</text>
</comment>
<comment type="catalytic activity">
    <reaction evidence="1">
        <text>(2S,6S)-2,6-diaminopimelate + 2-oxoglutarate = (S)-2,3,4,5-tetrahydrodipicolinate + L-glutamate + H2O + H(+)</text>
        <dbReference type="Rhea" id="RHEA:23988"/>
        <dbReference type="ChEBI" id="CHEBI:15377"/>
        <dbReference type="ChEBI" id="CHEBI:15378"/>
        <dbReference type="ChEBI" id="CHEBI:16810"/>
        <dbReference type="ChEBI" id="CHEBI:16845"/>
        <dbReference type="ChEBI" id="CHEBI:29985"/>
        <dbReference type="ChEBI" id="CHEBI:57609"/>
        <dbReference type="EC" id="2.6.1.83"/>
    </reaction>
</comment>
<comment type="cofactor">
    <cofactor evidence="1">
        <name>pyridoxal 5'-phosphate</name>
        <dbReference type="ChEBI" id="CHEBI:597326"/>
    </cofactor>
</comment>
<comment type="pathway">
    <text evidence="1">Amino-acid biosynthesis; L-lysine biosynthesis via DAP pathway; LL-2,6-diaminopimelate from (S)-tetrahydrodipicolinate (aminotransferase route): step 1/1.</text>
</comment>
<comment type="subunit">
    <text evidence="1">Homodimer.</text>
</comment>
<comment type="similarity">
    <text evidence="1">Belongs to the class-I pyridoxal-phosphate-dependent aminotransferase family. LL-diaminopimelate aminotransferase subfamily.</text>
</comment>
<protein>
    <recommendedName>
        <fullName evidence="1">LL-diaminopimelate aminotransferase</fullName>
        <shortName evidence="1">DAP-AT</shortName>
        <shortName evidence="1">DAP-aminotransferase</shortName>
        <shortName evidence="1">LL-DAP-aminotransferase</shortName>
        <ecNumber evidence="1">2.6.1.83</ecNumber>
    </recommendedName>
</protein>
<organism>
    <name type="scientific">Thermosynechococcus vestitus (strain NIES-2133 / IAM M-273 / BP-1)</name>
    <dbReference type="NCBI Taxonomy" id="197221"/>
    <lineage>
        <taxon>Bacteria</taxon>
        <taxon>Bacillati</taxon>
        <taxon>Cyanobacteriota</taxon>
        <taxon>Cyanophyceae</taxon>
        <taxon>Acaryochloridales</taxon>
        <taxon>Thermosynechococcaceae</taxon>
        <taxon>Thermosynechococcus</taxon>
    </lineage>
</organism>
<sequence>MAFVNANYLKLKAGYLFPEIARRVNQFLQAHPDAPLIRLGIGDVTEPLPAACREAMIKAVEEMGDRATFKGYGPEQGYPWLREKIAAHDFQARGCDIDASEIFISDGSKCDTGNILDIFGDSNRIAVTDPVYPVYVDTNVMAGHTGEANERGEYAGLVYLPITAENHFTATLPSEPVDLIYLCFPNNPTGAVASREHLQAWVDYARAHKAILFFDAAYEAFITDPAIPHSIYEIPGARECAIEFRSFSKNAGFTGTRCAFTVVPKGLKGQTPSGDAVELWSLWQRRQSTKFNGVSYIVQRGAEAVYSEAGQAQVRELVTFYMENARLIREKLTQAGFEVYGGVNAPYVWLKTPAGMGSWDFFDKLLHTCFVVGTPGAGFGAAGEGYLRLSAFNSRENVVEAMDRVVTAFA</sequence>
<reference key="1">
    <citation type="journal article" date="2002" name="DNA Res.">
        <title>Complete genome structure of the thermophilic cyanobacterium Thermosynechococcus elongatus BP-1.</title>
        <authorList>
            <person name="Nakamura Y."/>
            <person name="Kaneko T."/>
            <person name="Sato S."/>
            <person name="Ikeuchi M."/>
            <person name="Katoh H."/>
            <person name="Sasamoto S."/>
            <person name="Watanabe A."/>
            <person name="Iriguchi M."/>
            <person name="Kawashima K."/>
            <person name="Kimura T."/>
            <person name="Kishida Y."/>
            <person name="Kiyokawa C."/>
            <person name="Kohara M."/>
            <person name="Matsumoto M."/>
            <person name="Matsuno A."/>
            <person name="Nakazaki N."/>
            <person name="Shimpo S."/>
            <person name="Sugimoto M."/>
            <person name="Takeuchi C."/>
            <person name="Yamada M."/>
            <person name="Tabata S."/>
        </authorList>
    </citation>
    <scope>NUCLEOTIDE SEQUENCE [LARGE SCALE GENOMIC DNA]</scope>
    <source>
        <strain>NIES-2133 / IAM M-273 / BP-1</strain>
    </source>
</reference>
<keyword id="KW-0032">Aminotransferase</keyword>
<keyword id="KW-0663">Pyridoxal phosphate</keyword>
<keyword id="KW-1185">Reference proteome</keyword>
<keyword id="KW-0808">Transferase</keyword>